<proteinExistence type="inferred from homology"/>
<comment type="function">
    <text evidence="1">Involved in the TCA cycle. Catalyzes the stereospecific interconversion of fumarate to L-malate.</text>
</comment>
<comment type="catalytic activity">
    <reaction evidence="1">
        <text>(S)-malate = fumarate + H2O</text>
        <dbReference type="Rhea" id="RHEA:12460"/>
        <dbReference type="ChEBI" id="CHEBI:15377"/>
        <dbReference type="ChEBI" id="CHEBI:15589"/>
        <dbReference type="ChEBI" id="CHEBI:29806"/>
        <dbReference type="EC" id="4.2.1.2"/>
    </reaction>
</comment>
<comment type="pathway">
    <text evidence="1">Carbohydrate metabolism; tricarboxylic acid cycle; (S)-malate from fumarate: step 1/1.</text>
</comment>
<comment type="subunit">
    <text evidence="1">Homotetramer.</text>
</comment>
<comment type="subcellular location">
    <subcellularLocation>
        <location evidence="1">Cytoplasm</location>
    </subcellularLocation>
</comment>
<comment type="miscellaneous">
    <text evidence="1">There are 2 substrate-binding sites: the catalytic A site, and the non-catalytic B site that may play a role in the transfer of substrate or product between the active site and the solvent. Alternatively, the B site may bind allosteric effectors.</text>
</comment>
<comment type="similarity">
    <text evidence="1">Belongs to the class-II fumarase/aspartase family. Fumarase subfamily.</text>
</comment>
<dbReference type="EC" id="4.2.1.2" evidence="1"/>
<dbReference type="EMBL" id="AE001273">
    <property type="protein sequence ID" value="AAC68452.1"/>
    <property type="molecule type" value="Genomic_DNA"/>
</dbReference>
<dbReference type="PIR" id="H71462">
    <property type="entry name" value="H71462"/>
</dbReference>
<dbReference type="RefSeq" id="NP_220377.1">
    <property type="nucleotide sequence ID" value="NC_000117.1"/>
</dbReference>
<dbReference type="RefSeq" id="WP_009872244.1">
    <property type="nucleotide sequence ID" value="NC_000117.1"/>
</dbReference>
<dbReference type="SMR" id="O84863"/>
<dbReference type="FunCoup" id="O84863">
    <property type="interactions" value="187"/>
</dbReference>
<dbReference type="STRING" id="272561.CT_855"/>
<dbReference type="EnsemblBacteria" id="AAC68452">
    <property type="protein sequence ID" value="AAC68452"/>
    <property type="gene ID" value="CT_855"/>
</dbReference>
<dbReference type="GeneID" id="884656"/>
<dbReference type="KEGG" id="ctr:CT_855"/>
<dbReference type="PATRIC" id="fig|272561.5.peg.944"/>
<dbReference type="HOGENOM" id="CLU_021594_4_1_0"/>
<dbReference type="InParanoid" id="O84863"/>
<dbReference type="OrthoDB" id="9802809at2"/>
<dbReference type="BioCyc" id="MetaCyc:CT_855-MONOMER"/>
<dbReference type="UniPathway" id="UPA00223">
    <property type="reaction ID" value="UER01007"/>
</dbReference>
<dbReference type="Proteomes" id="UP000000431">
    <property type="component" value="Chromosome"/>
</dbReference>
<dbReference type="GO" id="GO:0005737">
    <property type="term" value="C:cytoplasm"/>
    <property type="evidence" value="ECO:0007669"/>
    <property type="project" value="UniProtKB-SubCell"/>
</dbReference>
<dbReference type="GO" id="GO:0004333">
    <property type="term" value="F:fumarate hydratase activity"/>
    <property type="evidence" value="ECO:0000318"/>
    <property type="project" value="GO_Central"/>
</dbReference>
<dbReference type="GO" id="GO:0006106">
    <property type="term" value="P:fumarate metabolic process"/>
    <property type="evidence" value="ECO:0000318"/>
    <property type="project" value="GO_Central"/>
</dbReference>
<dbReference type="GO" id="GO:0006108">
    <property type="term" value="P:malate metabolic process"/>
    <property type="evidence" value="ECO:0000318"/>
    <property type="project" value="GO_Central"/>
</dbReference>
<dbReference type="GO" id="GO:0006099">
    <property type="term" value="P:tricarboxylic acid cycle"/>
    <property type="evidence" value="ECO:0000318"/>
    <property type="project" value="GO_Central"/>
</dbReference>
<dbReference type="CDD" id="cd01362">
    <property type="entry name" value="Fumarase_classII"/>
    <property type="match status" value="1"/>
</dbReference>
<dbReference type="FunFam" id="1.10.40.30:FF:000002">
    <property type="entry name" value="Fumarate hydratase class II"/>
    <property type="match status" value="1"/>
</dbReference>
<dbReference type="FunFam" id="1.10.275.10:FF:000001">
    <property type="entry name" value="Fumarate hydratase, mitochondrial"/>
    <property type="match status" value="1"/>
</dbReference>
<dbReference type="FunFam" id="1.20.200.10:FF:000001">
    <property type="entry name" value="Fumarate hydratase, mitochondrial"/>
    <property type="match status" value="1"/>
</dbReference>
<dbReference type="Gene3D" id="1.10.40.30">
    <property type="entry name" value="Fumarase/aspartase (C-terminal domain)"/>
    <property type="match status" value="1"/>
</dbReference>
<dbReference type="Gene3D" id="1.20.200.10">
    <property type="entry name" value="Fumarase/aspartase (Central domain)"/>
    <property type="match status" value="1"/>
</dbReference>
<dbReference type="Gene3D" id="1.10.275.10">
    <property type="entry name" value="Fumarase/aspartase (N-terminal domain)"/>
    <property type="match status" value="1"/>
</dbReference>
<dbReference type="HAMAP" id="MF_00743">
    <property type="entry name" value="FumaraseC"/>
    <property type="match status" value="1"/>
</dbReference>
<dbReference type="InterPro" id="IPR005677">
    <property type="entry name" value="Fum_hydII"/>
</dbReference>
<dbReference type="InterPro" id="IPR024083">
    <property type="entry name" value="Fumarase/histidase_N"/>
</dbReference>
<dbReference type="InterPro" id="IPR018951">
    <property type="entry name" value="Fumarase_C_C"/>
</dbReference>
<dbReference type="InterPro" id="IPR020557">
    <property type="entry name" value="Fumarate_lyase_CS"/>
</dbReference>
<dbReference type="InterPro" id="IPR000362">
    <property type="entry name" value="Fumarate_lyase_fam"/>
</dbReference>
<dbReference type="InterPro" id="IPR022761">
    <property type="entry name" value="Fumarate_lyase_N"/>
</dbReference>
<dbReference type="InterPro" id="IPR008948">
    <property type="entry name" value="L-Aspartase-like"/>
</dbReference>
<dbReference type="NCBIfam" id="TIGR00979">
    <property type="entry name" value="fumC_II"/>
    <property type="match status" value="1"/>
</dbReference>
<dbReference type="PANTHER" id="PTHR11444">
    <property type="entry name" value="ASPARTATEAMMONIA/ARGININOSUCCINATE/ADENYLOSUCCINATE LYASE"/>
    <property type="match status" value="1"/>
</dbReference>
<dbReference type="PANTHER" id="PTHR11444:SF1">
    <property type="entry name" value="FUMARATE HYDRATASE, MITOCHONDRIAL"/>
    <property type="match status" value="1"/>
</dbReference>
<dbReference type="Pfam" id="PF10415">
    <property type="entry name" value="FumaraseC_C"/>
    <property type="match status" value="1"/>
</dbReference>
<dbReference type="Pfam" id="PF00206">
    <property type="entry name" value="Lyase_1"/>
    <property type="match status" value="1"/>
</dbReference>
<dbReference type="PRINTS" id="PR00149">
    <property type="entry name" value="FUMRATELYASE"/>
</dbReference>
<dbReference type="SUPFAM" id="SSF48557">
    <property type="entry name" value="L-aspartase-like"/>
    <property type="match status" value="1"/>
</dbReference>
<dbReference type="PROSITE" id="PS00163">
    <property type="entry name" value="FUMARATE_LYASES"/>
    <property type="match status" value="1"/>
</dbReference>
<gene>
    <name evidence="1" type="primary">fumC</name>
    <name type="ordered locus">CT_855</name>
</gene>
<organism>
    <name type="scientific">Chlamydia trachomatis serovar D (strain ATCC VR-885 / DSM 19411 / UW-3/Cx)</name>
    <dbReference type="NCBI Taxonomy" id="272561"/>
    <lineage>
        <taxon>Bacteria</taxon>
        <taxon>Pseudomonadati</taxon>
        <taxon>Chlamydiota</taxon>
        <taxon>Chlamydiia</taxon>
        <taxon>Chlamydiales</taxon>
        <taxon>Chlamydiaceae</taxon>
        <taxon>Chlamydia/Chlamydophila group</taxon>
        <taxon>Chlamydia</taxon>
    </lineage>
</organism>
<reference key="1">
    <citation type="journal article" date="1998" name="Science">
        <title>Genome sequence of an obligate intracellular pathogen of humans: Chlamydia trachomatis.</title>
        <authorList>
            <person name="Stephens R.S."/>
            <person name="Kalman S."/>
            <person name="Lammel C.J."/>
            <person name="Fan J."/>
            <person name="Marathe R."/>
            <person name="Aravind L."/>
            <person name="Mitchell W.P."/>
            <person name="Olinger L."/>
            <person name="Tatusov R.L."/>
            <person name="Zhao Q."/>
            <person name="Koonin E.V."/>
            <person name="Davis R.W."/>
        </authorList>
    </citation>
    <scope>NUCLEOTIDE SEQUENCE [LARGE SCALE GENOMIC DNA]</scope>
    <source>
        <strain>ATCC VR-885 / DSM 19411 / UW-3/Cx</strain>
    </source>
</reference>
<keyword id="KW-0963">Cytoplasm</keyword>
<keyword id="KW-0456">Lyase</keyword>
<keyword id="KW-1185">Reference proteome</keyword>
<keyword id="KW-0816">Tricarboxylic acid cycle</keyword>
<feature type="chain" id="PRO_0000161269" description="Fumarate hydratase class II">
    <location>
        <begin position="1"/>
        <end position="463"/>
    </location>
</feature>
<feature type="active site" description="Proton donor/acceptor" evidence="1">
    <location>
        <position position="185"/>
    </location>
</feature>
<feature type="active site" evidence="1">
    <location>
        <position position="315"/>
    </location>
</feature>
<feature type="binding site" evidence="1">
    <location>
        <begin position="95"/>
        <end position="97"/>
    </location>
    <ligand>
        <name>substrate</name>
    </ligand>
</feature>
<feature type="binding site" description="in site B" evidence="1">
    <location>
        <begin position="126"/>
        <end position="129"/>
    </location>
    <ligand>
        <name>substrate</name>
    </ligand>
</feature>
<feature type="binding site" evidence="1">
    <location>
        <begin position="136"/>
        <end position="138"/>
    </location>
    <ligand>
        <name>substrate</name>
    </ligand>
</feature>
<feature type="binding site" evidence="1">
    <location>
        <position position="184"/>
    </location>
    <ligand>
        <name>substrate</name>
    </ligand>
</feature>
<feature type="binding site" evidence="1">
    <location>
        <position position="316"/>
    </location>
    <ligand>
        <name>substrate</name>
    </ligand>
</feature>
<feature type="binding site" evidence="1">
    <location>
        <begin position="321"/>
        <end position="323"/>
    </location>
    <ligand>
        <name>substrate</name>
    </ligand>
</feature>
<feature type="site" description="Important for catalytic activity" evidence="1">
    <location>
        <position position="328"/>
    </location>
</feature>
<name>FUMC_CHLTR</name>
<sequence>MRQENDSLGIVLVPEDKLFGAQTGRSQEFFSYGKESMPLEIIHALVKIKKCAAKANGDLGCLDAKRRDMIVAATDEILSGEFDEHFPLKVWQTGSGTQSNMNVNEVIANLAIQRHGGELGSKHPVHPNDHVNKSQSSNDVFPTAMHIAAVQSIKGSLIPALEHLKKVIDAKALEFARDIKIGRTHLMDAVPMTLGQEFSGYSCQLHNCLERIGFSLTHLYELAIGGTAIGTGLNVPEGFVEKVIQYLRRETGEPFVPASNYFAALSNHDALVQAHGSLTVLACALVKIATDLSFLGSGPRCGLGEIFFPENEPGSSIMPGKINPTQSEALQMVCSQVIGNNQSIIFSGTKGNFELNVMKPVIIYDFLQSVNLLAGAMRSFADYFVCGLKVNKGQLQQNVERSLMLVTALAPVLGYDKCSKIALKAFHENLSLKEACVSLGFLSEKEFDEHVIPGLMVGNRGHE</sequence>
<evidence type="ECO:0000255" key="1">
    <source>
        <dbReference type="HAMAP-Rule" id="MF_00743"/>
    </source>
</evidence>
<protein>
    <recommendedName>
        <fullName evidence="1">Fumarate hydratase class II</fullName>
        <shortName evidence="1">Fumarase C</shortName>
        <ecNumber evidence="1">4.2.1.2</ecNumber>
    </recommendedName>
    <alternativeName>
        <fullName evidence="1">Aerobic fumarase</fullName>
    </alternativeName>
    <alternativeName>
        <fullName evidence="1">Iron-independent fumarase</fullName>
    </alternativeName>
</protein>
<accession>O84863</accession>